<reference key="1">
    <citation type="journal article" date="2002" name="Proc. Natl. Acad. Sci. U.S.A.">
        <title>Extensive mosaic structure revealed by the complete genome sequence of uropathogenic Escherichia coli.</title>
        <authorList>
            <person name="Welch R.A."/>
            <person name="Burland V."/>
            <person name="Plunkett G. III"/>
            <person name="Redford P."/>
            <person name="Roesch P."/>
            <person name="Rasko D."/>
            <person name="Buckles E.L."/>
            <person name="Liou S.-R."/>
            <person name="Boutin A."/>
            <person name="Hackett J."/>
            <person name="Stroud D."/>
            <person name="Mayhew G.F."/>
            <person name="Rose D.J."/>
            <person name="Zhou S."/>
            <person name="Schwartz D.C."/>
            <person name="Perna N.T."/>
            <person name="Mobley H.L.T."/>
            <person name="Donnenberg M.S."/>
            <person name="Blattner F.R."/>
        </authorList>
    </citation>
    <scope>NUCLEOTIDE SEQUENCE [LARGE SCALE GENOMIC DNA]</scope>
    <source>
        <strain>CFT073 / ATCC 700928 / UPEC</strain>
    </source>
</reference>
<feature type="initiator methionine" description="Removed" evidence="1">
    <location>
        <position position="1"/>
    </location>
</feature>
<feature type="chain" id="PRO_0000161118" description="Elongation factor Ts">
    <location>
        <begin position="2"/>
        <end position="283"/>
    </location>
</feature>
<feature type="region of interest" description="Involved in Mg(2+) ion dislocation from EF-Tu" evidence="1">
    <location>
        <begin position="80"/>
        <end position="83"/>
    </location>
</feature>
<dbReference type="EMBL" id="AE014075">
    <property type="protein sequence ID" value="AAN78700.1"/>
    <property type="molecule type" value="Genomic_DNA"/>
</dbReference>
<dbReference type="RefSeq" id="WP_000818114.1">
    <property type="nucleotide sequence ID" value="NZ_CP051263.1"/>
</dbReference>
<dbReference type="SMR" id="P0A6P2"/>
<dbReference type="STRING" id="199310.c0206"/>
<dbReference type="GeneID" id="93777255"/>
<dbReference type="KEGG" id="ecc:c0206"/>
<dbReference type="eggNOG" id="COG0264">
    <property type="taxonomic scope" value="Bacteria"/>
</dbReference>
<dbReference type="HOGENOM" id="CLU_047155_0_2_6"/>
<dbReference type="BioCyc" id="ECOL199310:C0206-MONOMER"/>
<dbReference type="Proteomes" id="UP000001410">
    <property type="component" value="Chromosome"/>
</dbReference>
<dbReference type="GO" id="GO:0005737">
    <property type="term" value="C:cytoplasm"/>
    <property type="evidence" value="ECO:0007669"/>
    <property type="project" value="UniProtKB-SubCell"/>
</dbReference>
<dbReference type="GO" id="GO:0003746">
    <property type="term" value="F:translation elongation factor activity"/>
    <property type="evidence" value="ECO:0007669"/>
    <property type="project" value="UniProtKB-UniRule"/>
</dbReference>
<dbReference type="CDD" id="cd14275">
    <property type="entry name" value="UBA_EF-Ts"/>
    <property type="match status" value="1"/>
</dbReference>
<dbReference type="FunFam" id="1.10.286.20:FF:000001">
    <property type="entry name" value="Elongation factor Ts"/>
    <property type="match status" value="1"/>
</dbReference>
<dbReference type="FunFam" id="1.10.8.10:FF:000001">
    <property type="entry name" value="Elongation factor Ts"/>
    <property type="match status" value="1"/>
</dbReference>
<dbReference type="FunFam" id="3.30.479.20:FF:000001">
    <property type="entry name" value="Elongation factor Ts"/>
    <property type="match status" value="1"/>
</dbReference>
<dbReference type="Gene3D" id="1.10.286.20">
    <property type="match status" value="1"/>
</dbReference>
<dbReference type="Gene3D" id="1.10.8.10">
    <property type="entry name" value="DNA helicase RuvA subunit, C-terminal domain"/>
    <property type="match status" value="1"/>
</dbReference>
<dbReference type="Gene3D" id="3.30.479.20">
    <property type="entry name" value="Elongation factor Ts, dimerisation domain"/>
    <property type="match status" value="2"/>
</dbReference>
<dbReference type="HAMAP" id="MF_00050">
    <property type="entry name" value="EF_Ts"/>
    <property type="match status" value="1"/>
</dbReference>
<dbReference type="InterPro" id="IPR036402">
    <property type="entry name" value="EF-Ts_dimer_sf"/>
</dbReference>
<dbReference type="InterPro" id="IPR001816">
    <property type="entry name" value="Transl_elong_EFTs/EF1B"/>
</dbReference>
<dbReference type="InterPro" id="IPR014039">
    <property type="entry name" value="Transl_elong_EFTs/EF1B_dimer"/>
</dbReference>
<dbReference type="InterPro" id="IPR018101">
    <property type="entry name" value="Transl_elong_Ts_CS"/>
</dbReference>
<dbReference type="InterPro" id="IPR009060">
    <property type="entry name" value="UBA-like_sf"/>
</dbReference>
<dbReference type="NCBIfam" id="TIGR00116">
    <property type="entry name" value="tsf"/>
    <property type="match status" value="1"/>
</dbReference>
<dbReference type="PANTHER" id="PTHR11741">
    <property type="entry name" value="ELONGATION FACTOR TS"/>
    <property type="match status" value="1"/>
</dbReference>
<dbReference type="PANTHER" id="PTHR11741:SF0">
    <property type="entry name" value="ELONGATION FACTOR TS, MITOCHONDRIAL"/>
    <property type="match status" value="1"/>
</dbReference>
<dbReference type="Pfam" id="PF00889">
    <property type="entry name" value="EF_TS"/>
    <property type="match status" value="1"/>
</dbReference>
<dbReference type="SUPFAM" id="SSF54713">
    <property type="entry name" value="Elongation factor Ts (EF-Ts), dimerisation domain"/>
    <property type="match status" value="2"/>
</dbReference>
<dbReference type="SUPFAM" id="SSF46934">
    <property type="entry name" value="UBA-like"/>
    <property type="match status" value="1"/>
</dbReference>
<dbReference type="PROSITE" id="PS01126">
    <property type="entry name" value="EF_TS_1"/>
    <property type="match status" value="1"/>
</dbReference>
<dbReference type="PROSITE" id="PS01127">
    <property type="entry name" value="EF_TS_2"/>
    <property type="match status" value="1"/>
</dbReference>
<evidence type="ECO:0000250" key="1"/>
<evidence type="ECO:0000305" key="2"/>
<keyword id="KW-0963">Cytoplasm</keyword>
<keyword id="KW-0251">Elongation factor</keyword>
<keyword id="KW-0648">Protein biosynthesis</keyword>
<keyword id="KW-1185">Reference proteome</keyword>
<sequence length="283" mass="30423">MAEITASLVKELRERTGAGMMDCKKALTEANGDIELAIENMRKSGAIKAAKKAGNVAADGVIKTKIDGNYGIILEVNCQTDFVAKDAGFQAFADKVLDAAVAGKITDVEVLKAQFEEERVALVAKIGENINIRRVAALEGDVLGSYQHGARIGVLVAAKGADEELVKHIAMHVAASKPEFIKPEDVSAEVVEKEYQVQLDIAMQSGKPKEIAEKMVEGRMKKFTGEVSLTGQPFVMEPSKTVGQLLKEHNAEVTGFIRFEVGEGIEKVETDFAAEVAAMSKQS</sequence>
<name>EFTS_ECOL6</name>
<organism>
    <name type="scientific">Escherichia coli O6:H1 (strain CFT073 / ATCC 700928 / UPEC)</name>
    <dbReference type="NCBI Taxonomy" id="199310"/>
    <lineage>
        <taxon>Bacteria</taxon>
        <taxon>Pseudomonadati</taxon>
        <taxon>Pseudomonadota</taxon>
        <taxon>Gammaproteobacteria</taxon>
        <taxon>Enterobacterales</taxon>
        <taxon>Enterobacteriaceae</taxon>
        <taxon>Escherichia</taxon>
    </lineage>
</organism>
<gene>
    <name type="primary">tsf</name>
    <name type="ordered locus">c0206</name>
</gene>
<proteinExistence type="inferred from homology"/>
<comment type="function">
    <text evidence="1">Associates with the EF-Tu.GDP complex and induces the exchange of GDP to GTP. It remains bound to the aminoacyl-tRNA.EF-Tu.GTP complex up to the GTP hydrolysis stage on the ribosome (By similarity).</text>
</comment>
<comment type="subunit">
    <text evidence="1">Heterotetramer composed of two EF-Ts.EF-Tu dimer complexes.</text>
</comment>
<comment type="subcellular location">
    <subcellularLocation>
        <location evidence="1">Cytoplasm</location>
    </subcellularLocation>
</comment>
<comment type="similarity">
    <text evidence="2">Belongs to the EF-Ts family.</text>
</comment>
<accession>P0A6P2</accession>
<accession>P02997</accession>
<protein>
    <recommendedName>
        <fullName>Elongation factor Ts</fullName>
        <shortName>EF-Ts</shortName>
    </recommendedName>
</protein>